<feature type="chain" id="PRO_1000050270" description="4-hydroxy-tetrahydrodipicolinate synthase">
    <location>
        <begin position="1"/>
        <end position="294"/>
    </location>
</feature>
<feature type="active site" description="Proton donor/acceptor" evidence="1">
    <location>
        <position position="133"/>
    </location>
</feature>
<feature type="active site" description="Schiff-base intermediate with substrate" evidence="1">
    <location>
        <position position="161"/>
    </location>
</feature>
<feature type="binding site" evidence="1">
    <location>
        <position position="45"/>
    </location>
    <ligand>
        <name>pyruvate</name>
        <dbReference type="ChEBI" id="CHEBI:15361"/>
    </ligand>
</feature>
<feature type="binding site" evidence="1">
    <location>
        <position position="203"/>
    </location>
    <ligand>
        <name>pyruvate</name>
        <dbReference type="ChEBI" id="CHEBI:15361"/>
    </ligand>
</feature>
<feature type="site" description="Part of a proton relay during catalysis" evidence="1">
    <location>
        <position position="44"/>
    </location>
</feature>
<feature type="site" description="Part of a proton relay during catalysis" evidence="1">
    <location>
        <position position="107"/>
    </location>
</feature>
<sequence length="294" mass="30965">MINGSIVALITPMNSDGSIDFASLERLVEFHIDQGTDAIVAVGTTGESATLPMSEHVTVVAQTVKFAAGRIPVIGGNGANATAEAIELTKSLSKVGVAGMLGVTPYYNKPTPKGLIAHYKAVAASTDIPQILYNVPGRTAVDMQPETVAELVGVSNIIGVKEATGDIARVKRLRELCGNDFKLYSGDDATAREFLLLGGNGVISVANNIVPKAFKAMCDAALAGNAELALSLDTPLRGLYSTLFCEANPIPVKWAAHRMGLIKCGHIRLPLTELSEQCHGLLIDAMTRAQIEVK</sequence>
<name>DAPA_SHESW</name>
<reference key="1">
    <citation type="submission" date="2006-12" db="EMBL/GenBank/DDBJ databases">
        <title>Complete sequence of Shewanella sp. W3-18-1.</title>
        <authorList>
            <consortium name="US DOE Joint Genome Institute"/>
            <person name="Copeland A."/>
            <person name="Lucas S."/>
            <person name="Lapidus A."/>
            <person name="Barry K."/>
            <person name="Detter J.C."/>
            <person name="Glavina del Rio T."/>
            <person name="Hammon N."/>
            <person name="Israni S."/>
            <person name="Dalin E."/>
            <person name="Tice H."/>
            <person name="Pitluck S."/>
            <person name="Chain P."/>
            <person name="Malfatti S."/>
            <person name="Shin M."/>
            <person name="Vergez L."/>
            <person name="Schmutz J."/>
            <person name="Larimer F."/>
            <person name="Land M."/>
            <person name="Hauser L."/>
            <person name="Kyrpides N."/>
            <person name="Lykidis A."/>
            <person name="Tiedje J."/>
            <person name="Richardson P."/>
        </authorList>
    </citation>
    <scope>NUCLEOTIDE SEQUENCE [LARGE SCALE GENOMIC DNA]</scope>
    <source>
        <strain>W3-18-1</strain>
    </source>
</reference>
<accession>A1RKF2</accession>
<gene>
    <name evidence="1" type="primary">dapA</name>
    <name type="ordered locus">Sputw3181_2323</name>
</gene>
<dbReference type="EC" id="4.3.3.7" evidence="1"/>
<dbReference type="EMBL" id="CP000503">
    <property type="protein sequence ID" value="ABM25147.1"/>
    <property type="molecule type" value="Genomic_DNA"/>
</dbReference>
<dbReference type="RefSeq" id="WP_011789612.1">
    <property type="nucleotide sequence ID" value="NC_008750.1"/>
</dbReference>
<dbReference type="SMR" id="A1RKF2"/>
<dbReference type="GeneID" id="67443236"/>
<dbReference type="KEGG" id="shw:Sputw3181_2323"/>
<dbReference type="HOGENOM" id="CLU_049343_7_1_6"/>
<dbReference type="UniPathway" id="UPA00034">
    <property type="reaction ID" value="UER00017"/>
</dbReference>
<dbReference type="Proteomes" id="UP000002597">
    <property type="component" value="Chromosome"/>
</dbReference>
<dbReference type="GO" id="GO:0005829">
    <property type="term" value="C:cytosol"/>
    <property type="evidence" value="ECO:0007669"/>
    <property type="project" value="TreeGrafter"/>
</dbReference>
<dbReference type="GO" id="GO:0008840">
    <property type="term" value="F:4-hydroxy-tetrahydrodipicolinate synthase activity"/>
    <property type="evidence" value="ECO:0007669"/>
    <property type="project" value="UniProtKB-UniRule"/>
</dbReference>
<dbReference type="GO" id="GO:0019877">
    <property type="term" value="P:diaminopimelate biosynthetic process"/>
    <property type="evidence" value="ECO:0007669"/>
    <property type="project" value="UniProtKB-UniRule"/>
</dbReference>
<dbReference type="GO" id="GO:0009089">
    <property type="term" value="P:lysine biosynthetic process via diaminopimelate"/>
    <property type="evidence" value="ECO:0007669"/>
    <property type="project" value="UniProtKB-UniRule"/>
</dbReference>
<dbReference type="CDD" id="cd00950">
    <property type="entry name" value="DHDPS"/>
    <property type="match status" value="1"/>
</dbReference>
<dbReference type="Gene3D" id="3.20.20.70">
    <property type="entry name" value="Aldolase class I"/>
    <property type="match status" value="1"/>
</dbReference>
<dbReference type="HAMAP" id="MF_00418">
    <property type="entry name" value="DapA"/>
    <property type="match status" value="1"/>
</dbReference>
<dbReference type="InterPro" id="IPR013785">
    <property type="entry name" value="Aldolase_TIM"/>
</dbReference>
<dbReference type="InterPro" id="IPR005263">
    <property type="entry name" value="DapA"/>
</dbReference>
<dbReference type="InterPro" id="IPR002220">
    <property type="entry name" value="DapA-like"/>
</dbReference>
<dbReference type="InterPro" id="IPR020625">
    <property type="entry name" value="Schiff_base-form_aldolases_AS"/>
</dbReference>
<dbReference type="InterPro" id="IPR020624">
    <property type="entry name" value="Schiff_base-form_aldolases_CS"/>
</dbReference>
<dbReference type="NCBIfam" id="TIGR00674">
    <property type="entry name" value="dapA"/>
    <property type="match status" value="1"/>
</dbReference>
<dbReference type="PANTHER" id="PTHR12128:SF66">
    <property type="entry name" value="4-HYDROXY-2-OXOGLUTARATE ALDOLASE, MITOCHONDRIAL"/>
    <property type="match status" value="1"/>
</dbReference>
<dbReference type="PANTHER" id="PTHR12128">
    <property type="entry name" value="DIHYDRODIPICOLINATE SYNTHASE"/>
    <property type="match status" value="1"/>
</dbReference>
<dbReference type="Pfam" id="PF00701">
    <property type="entry name" value="DHDPS"/>
    <property type="match status" value="1"/>
</dbReference>
<dbReference type="PIRSF" id="PIRSF001365">
    <property type="entry name" value="DHDPS"/>
    <property type="match status" value="1"/>
</dbReference>
<dbReference type="PRINTS" id="PR00146">
    <property type="entry name" value="DHPICSNTHASE"/>
</dbReference>
<dbReference type="SMART" id="SM01130">
    <property type="entry name" value="DHDPS"/>
    <property type="match status" value="1"/>
</dbReference>
<dbReference type="SUPFAM" id="SSF51569">
    <property type="entry name" value="Aldolase"/>
    <property type="match status" value="1"/>
</dbReference>
<dbReference type="PROSITE" id="PS00665">
    <property type="entry name" value="DHDPS_1"/>
    <property type="match status" value="1"/>
</dbReference>
<dbReference type="PROSITE" id="PS00666">
    <property type="entry name" value="DHDPS_2"/>
    <property type="match status" value="1"/>
</dbReference>
<comment type="function">
    <text evidence="1">Catalyzes the condensation of (S)-aspartate-beta-semialdehyde [(S)-ASA] and pyruvate to 4-hydroxy-tetrahydrodipicolinate (HTPA).</text>
</comment>
<comment type="catalytic activity">
    <reaction evidence="1">
        <text>L-aspartate 4-semialdehyde + pyruvate = (2S,4S)-4-hydroxy-2,3,4,5-tetrahydrodipicolinate + H2O + H(+)</text>
        <dbReference type="Rhea" id="RHEA:34171"/>
        <dbReference type="ChEBI" id="CHEBI:15361"/>
        <dbReference type="ChEBI" id="CHEBI:15377"/>
        <dbReference type="ChEBI" id="CHEBI:15378"/>
        <dbReference type="ChEBI" id="CHEBI:67139"/>
        <dbReference type="ChEBI" id="CHEBI:537519"/>
        <dbReference type="EC" id="4.3.3.7"/>
    </reaction>
</comment>
<comment type="pathway">
    <text evidence="1">Amino-acid biosynthesis; L-lysine biosynthesis via DAP pathway; (S)-tetrahydrodipicolinate from L-aspartate: step 3/4.</text>
</comment>
<comment type="subunit">
    <text evidence="1">Homotetramer; dimer of dimers.</text>
</comment>
<comment type="subcellular location">
    <subcellularLocation>
        <location evidence="1">Cytoplasm</location>
    </subcellularLocation>
</comment>
<comment type="similarity">
    <text evidence="1">Belongs to the DapA family.</text>
</comment>
<comment type="caution">
    <text evidence="2">Was originally thought to be a dihydrodipicolinate synthase (DHDPS), catalyzing the condensation of (S)-aspartate-beta-semialdehyde [(S)-ASA] and pyruvate to dihydrodipicolinate (DHDP). However, it was shown in E.coli that the product of the enzymatic reaction is not dihydrodipicolinate but in fact (4S)-4-hydroxy-2,3,4,5-tetrahydro-(2S)-dipicolinic acid (HTPA), and that the consecutive dehydration reaction leading to DHDP is not spontaneous but catalyzed by DapB.</text>
</comment>
<evidence type="ECO:0000255" key="1">
    <source>
        <dbReference type="HAMAP-Rule" id="MF_00418"/>
    </source>
</evidence>
<evidence type="ECO:0000305" key="2"/>
<proteinExistence type="inferred from homology"/>
<organism>
    <name type="scientific">Shewanella sp. (strain W3-18-1)</name>
    <dbReference type="NCBI Taxonomy" id="351745"/>
    <lineage>
        <taxon>Bacteria</taxon>
        <taxon>Pseudomonadati</taxon>
        <taxon>Pseudomonadota</taxon>
        <taxon>Gammaproteobacteria</taxon>
        <taxon>Alteromonadales</taxon>
        <taxon>Shewanellaceae</taxon>
        <taxon>Shewanella</taxon>
    </lineage>
</organism>
<keyword id="KW-0028">Amino-acid biosynthesis</keyword>
<keyword id="KW-0963">Cytoplasm</keyword>
<keyword id="KW-0220">Diaminopimelate biosynthesis</keyword>
<keyword id="KW-0456">Lyase</keyword>
<keyword id="KW-0457">Lysine biosynthesis</keyword>
<keyword id="KW-0704">Schiff base</keyword>
<protein>
    <recommendedName>
        <fullName evidence="1">4-hydroxy-tetrahydrodipicolinate synthase</fullName>
        <shortName evidence="1">HTPA synthase</shortName>
        <ecNumber evidence="1">4.3.3.7</ecNumber>
    </recommendedName>
</protein>